<organism>
    <name type="scientific">Neisseria meningitidis serogroup C (strain 053442)</name>
    <dbReference type="NCBI Taxonomy" id="374833"/>
    <lineage>
        <taxon>Bacteria</taxon>
        <taxon>Pseudomonadati</taxon>
        <taxon>Pseudomonadota</taxon>
        <taxon>Betaproteobacteria</taxon>
        <taxon>Neisseriales</taxon>
        <taxon>Neisseriaceae</taxon>
        <taxon>Neisseria</taxon>
    </lineage>
</organism>
<accession>A9M3G2</accession>
<proteinExistence type="inferred from homology"/>
<dbReference type="EMBL" id="CP000381">
    <property type="protein sequence ID" value="ABX74056.1"/>
    <property type="molecule type" value="Genomic_DNA"/>
</dbReference>
<dbReference type="RefSeq" id="WP_002215574.1">
    <property type="nucleotide sequence ID" value="NC_010120.1"/>
</dbReference>
<dbReference type="SMR" id="A9M3G2"/>
<dbReference type="GeneID" id="93387307"/>
<dbReference type="KEGG" id="nmn:NMCC_1925"/>
<dbReference type="HOGENOM" id="CLU_108696_5_1_4"/>
<dbReference type="UniPathway" id="UPA00094"/>
<dbReference type="Proteomes" id="UP000001177">
    <property type="component" value="Chromosome"/>
</dbReference>
<dbReference type="GO" id="GO:0005829">
    <property type="term" value="C:cytosol"/>
    <property type="evidence" value="ECO:0007669"/>
    <property type="project" value="TreeGrafter"/>
</dbReference>
<dbReference type="GO" id="GO:0016020">
    <property type="term" value="C:membrane"/>
    <property type="evidence" value="ECO:0007669"/>
    <property type="project" value="GOC"/>
</dbReference>
<dbReference type="GO" id="GO:0000035">
    <property type="term" value="F:acyl binding"/>
    <property type="evidence" value="ECO:0007669"/>
    <property type="project" value="TreeGrafter"/>
</dbReference>
<dbReference type="GO" id="GO:0000036">
    <property type="term" value="F:acyl carrier activity"/>
    <property type="evidence" value="ECO:0007669"/>
    <property type="project" value="UniProtKB-UniRule"/>
</dbReference>
<dbReference type="GO" id="GO:0009245">
    <property type="term" value="P:lipid A biosynthetic process"/>
    <property type="evidence" value="ECO:0007669"/>
    <property type="project" value="TreeGrafter"/>
</dbReference>
<dbReference type="FunFam" id="1.10.1200.10:FF:000001">
    <property type="entry name" value="Acyl carrier protein"/>
    <property type="match status" value="1"/>
</dbReference>
<dbReference type="Gene3D" id="1.10.1200.10">
    <property type="entry name" value="ACP-like"/>
    <property type="match status" value="1"/>
</dbReference>
<dbReference type="HAMAP" id="MF_01217">
    <property type="entry name" value="Acyl_carrier"/>
    <property type="match status" value="1"/>
</dbReference>
<dbReference type="InterPro" id="IPR003231">
    <property type="entry name" value="ACP"/>
</dbReference>
<dbReference type="InterPro" id="IPR036736">
    <property type="entry name" value="ACP-like_sf"/>
</dbReference>
<dbReference type="InterPro" id="IPR009081">
    <property type="entry name" value="PP-bd_ACP"/>
</dbReference>
<dbReference type="InterPro" id="IPR006162">
    <property type="entry name" value="Ppantetheine_attach_site"/>
</dbReference>
<dbReference type="NCBIfam" id="TIGR00517">
    <property type="entry name" value="acyl_carrier"/>
    <property type="match status" value="1"/>
</dbReference>
<dbReference type="NCBIfam" id="NF002148">
    <property type="entry name" value="PRK00982.1-2"/>
    <property type="match status" value="1"/>
</dbReference>
<dbReference type="NCBIfam" id="NF002149">
    <property type="entry name" value="PRK00982.1-3"/>
    <property type="match status" value="1"/>
</dbReference>
<dbReference type="NCBIfam" id="NF002150">
    <property type="entry name" value="PRK00982.1-4"/>
    <property type="match status" value="1"/>
</dbReference>
<dbReference type="NCBIfam" id="NF002151">
    <property type="entry name" value="PRK00982.1-5"/>
    <property type="match status" value="1"/>
</dbReference>
<dbReference type="PANTHER" id="PTHR20863">
    <property type="entry name" value="ACYL CARRIER PROTEIN"/>
    <property type="match status" value="1"/>
</dbReference>
<dbReference type="PANTHER" id="PTHR20863:SF76">
    <property type="entry name" value="CARRIER DOMAIN-CONTAINING PROTEIN"/>
    <property type="match status" value="1"/>
</dbReference>
<dbReference type="Pfam" id="PF00550">
    <property type="entry name" value="PP-binding"/>
    <property type="match status" value="1"/>
</dbReference>
<dbReference type="SUPFAM" id="SSF47336">
    <property type="entry name" value="ACP-like"/>
    <property type="match status" value="1"/>
</dbReference>
<dbReference type="PROSITE" id="PS50075">
    <property type="entry name" value="CARRIER"/>
    <property type="match status" value="1"/>
</dbReference>
<dbReference type="PROSITE" id="PS00012">
    <property type="entry name" value="PHOSPHOPANTETHEINE"/>
    <property type="match status" value="1"/>
</dbReference>
<feature type="chain" id="PRO_1000085606" description="Acyl carrier protein">
    <location>
        <begin position="1"/>
        <end position="78"/>
    </location>
</feature>
<feature type="domain" description="Carrier" evidence="2">
    <location>
        <begin position="2"/>
        <end position="77"/>
    </location>
</feature>
<feature type="modified residue" description="O-(pantetheine 4'-phosphoryl)serine" evidence="2">
    <location>
        <position position="37"/>
    </location>
</feature>
<reference key="1">
    <citation type="journal article" date="2008" name="Genomics">
        <title>Characterization of ST-4821 complex, a unique Neisseria meningitidis clone.</title>
        <authorList>
            <person name="Peng J."/>
            <person name="Yang L."/>
            <person name="Yang F."/>
            <person name="Yang J."/>
            <person name="Yan Y."/>
            <person name="Nie H."/>
            <person name="Zhang X."/>
            <person name="Xiong Z."/>
            <person name="Jiang Y."/>
            <person name="Cheng F."/>
            <person name="Xu X."/>
            <person name="Chen S."/>
            <person name="Sun L."/>
            <person name="Li W."/>
            <person name="Shen Y."/>
            <person name="Shao Z."/>
            <person name="Liang X."/>
            <person name="Xu J."/>
            <person name="Jin Q."/>
        </authorList>
    </citation>
    <scope>NUCLEOTIDE SEQUENCE [LARGE SCALE GENOMIC DNA]</scope>
    <source>
        <strain>053442</strain>
    </source>
</reference>
<protein>
    <recommendedName>
        <fullName evidence="1">Acyl carrier protein</fullName>
        <shortName evidence="1">ACP</shortName>
    </recommendedName>
</protein>
<gene>
    <name evidence="1" type="primary">acpP</name>
    <name type="ordered locus">NMCC_1925</name>
</gene>
<name>ACP_NEIM0</name>
<comment type="function">
    <text evidence="1">Carrier of the growing fatty acid chain in fatty acid biosynthesis.</text>
</comment>
<comment type="pathway">
    <text evidence="1">Lipid metabolism; fatty acid biosynthesis.</text>
</comment>
<comment type="subcellular location">
    <subcellularLocation>
        <location evidence="1">Cytoplasm</location>
    </subcellularLocation>
</comment>
<comment type="PTM">
    <text evidence="1">4'-phosphopantetheine is transferred from CoA to a specific serine of apo-ACP by AcpS. This modification is essential for activity because fatty acids are bound in thioester linkage to the sulfhydryl of the prosthetic group.</text>
</comment>
<comment type="similarity">
    <text evidence="1">Belongs to the acyl carrier protein (ACP) family.</text>
</comment>
<evidence type="ECO:0000255" key="1">
    <source>
        <dbReference type="HAMAP-Rule" id="MF_01217"/>
    </source>
</evidence>
<evidence type="ECO:0000255" key="2">
    <source>
        <dbReference type="PROSITE-ProRule" id="PRU00258"/>
    </source>
</evidence>
<sequence>MSNIEQQVKKIVAEQLGVNEADVKNESSFQDDLGADSLDTVELVMALEEAFGCEIPDEDAEKITTVQLAIDYINAHNG</sequence>
<keyword id="KW-0963">Cytoplasm</keyword>
<keyword id="KW-0275">Fatty acid biosynthesis</keyword>
<keyword id="KW-0276">Fatty acid metabolism</keyword>
<keyword id="KW-0444">Lipid biosynthesis</keyword>
<keyword id="KW-0443">Lipid metabolism</keyword>
<keyword id="KW-0596">Phosphopantetheine</keyword>
<keyword id="KW-0597">Phosphoprotein</keyword>